<keyword id="KW-0378">Hydrolase</keyword>
<keyword id="KW-0460">Magnesium</keyword>
<keyword id="KW-0479">Metal-binding</keyword>
<keyword id="KW-0704">Schiff base</keyword>
<dbReference type="EC" id="3.11.1.1" evidence="1"/>
<dbReference type="EMBL" id="AE017194">
    <property type="protein sequence ID" value="AAS40368.1"/>
    <property type="molecule type" value="Genomic_DNA"/>
</dbReference>
<dbReference type="SMR" id="Q73BH9"/>
<dbReference type="KEGG" id="bca:BCE_1439"/>
<dbReference type="HOGENOM" id="CLU_045011_12_0_9"/>
<dbReference type="Proteomes" id="UP000002527">
    <property type="component" value="Chromosome"/>
</dbReference>
<dbReference type="GO" id="GO:0005829">
    <property type="term" value="C:cytosol"/>
    <property type="evidence" value="ECO:0007669"/>
    <property type="project" value="TreeGrafter"/>
</dbReference>
<dbReference type="GO" id="GO:0000287">
    <property type="term" value="F:magnesium ion binding"/>
    <property type="evidence" value="ECO:0007669"/>
    <property type="project" value="UniProtKB-UniRule"/>
</dbReference>
<dbReference type="GO" id="GO:0008967">
    <property type="term" value="F:phosphoglycolate phosphatase activity"/>
    <property type="evidence" value="ECO:0007669"/>
    <property type="project" value="TreeGrafter"/>
</dbReference>
<dbReference type="GO" id="GO:0050194">
    <property type="term" value="F:phosphonoacetaldehyde hydrolase activity"/>
    <property type="evidence" value="ECO:0007669"/>
    <property type="project" value="UniProtKB-UniRule"/>
</dbReference>
<dbReference type="GO" id="GO:0006281">
    <property type="term" value="P:DNA repair"/>
    <property type="evidence" value="ECO:0007669"/>
    <property type="project" value="TreeGrafter"/>
</dbReference>
<dbReference type="GO" id="GO:0019700">
    <property type="term" value="P:organic phosphonate catabolic process"/>
    <property type="evidence" value="ECO:0007669"/>
    <property type="project" value="InterPro"/>
</dbReference>
<dbReference type="CDD" id="cd02586">
    <property type="entry name" value="HAD_PHN"/>
    <property type="match status" value="1"/>
</dbReference>
<dbReference type="FunFam" id="1.10.150.240:FF:000006">
    <property type="entry name" value="Phosphonoacetaldehyde hydrolase"/>
    <property type="match status" value="1"/>
</dbReference>
<dbReference type="FunFam" id="3.40.50.1000:FF:000072">
    <property type="entry name" value="Phosphonoacetaldehyde hydrolase"/>
    <property type="match status" value="1"/>
</dbReference>
<dbReference type="Gene3D" id="3.40.50.1000">
    <property type="entry name" value="HAD superfamily/HAD-like"/>
    <property type="match status" value="1"/>
</dbReference>
<dbReference type="Gene3D" id="1.10.150.240">
    <property type="entry name" value="Putative phosphatase, domain 2"/>
    <property type="match status" value="1"/>
</dbReference>
<dbReference type="HAMAP" id="MF_01375">
    <property type="entry name" value="PhnX"/>
    <property type="match status" value="1"/>
</dbReference>
<dbReference type="InterPro" id="IPR050155">
    <property type="entry name" value="HAD-like_hydrolase_sf"/>
</dbReference>
<dbReference type="InterPro" id="IPR036412">
    <property type="entry name" value="HAD-like_sf"/>
</dbReference>
<dbReference type="InterPro" id="IPR006439">
    <property type="entry name" value="HAD-SF_hydro_IA"/>
</dbReference>
<dbReference type="InterPro" id="IPR023214">
    <property type="entry name" value="HAD_sf"/>
</dbReference>
<dbReference type="InterPro" id="IPR023198">
    <property type="entry name" value="PGP-like_dom2"/>
</dbReference>
<dbReference type="InterPro" id="IPR006323">
    <property type="entry name" value="Phosphonoacetald_hydro"/>
</dbReference>
<dbReference type="NCBIfam" id="TIGR01549">
    <property type="entry name" value="HAD-SF-IA-v1"/>
    <property type="match status" value="1"/>
</dbReference>
<dbReference type="NCBIfam" id="TIGR01509">
    <property type="entry name" value="HAD-SF-IA-v3"/>
    <property type="match status" value="1"/>
</dbReference>
<dbReference type="NCBIfam" id="TIGR01422">
    <property type="entry name" value="phosphonatase"/>
    <property type="match status" value="1"/>
</dbReference>
<dbReference type="PANTHER" id="PTHR43434">
    <property type="entry name" value="PHOSPHOGLYCOLATE PHOSPHATASE"/>
    <property type="match status" value="1"/>
</dbReference>
<dbReference type="PANTHER" id="PTHR43434:SF19">
    <property type="entry name" value="PHOSPHONOACETALDEHYDE HYDROLASE"/>
    <property type="match status" value="1"/>
</dbReference>
<dbReference type="Pfam" id="PF00702">
    <property type="entry name" value="Hydrolase"/>
    <property type="match status" value="1"/>
</dbReference>
<dbReference type="SFLD" id="SFLDG01135">
    <property type="entry name" value="C1.5.6:_HAD__Beta-PGM__Phospha"/>
    <property type="match status" value="1"/>
</dbReference>
<dbReference type="SFLD" id="SFLDF00038">
    <property type="entry name" value="phosphonoacetaldehyde_hydrolas"/>
    <property type="match status" value="1"/>
</dbReference>
<dbReference type="SUPFAM" id="SSF56784">
    <property type="entry name" value="HAD-like"/>
    <property type="match status" value="1"/>
</dbReference>
<evidence type="ECO:0000255" key="1">
    <source>
        <dbReference type="HAMAP-Rule" id="MF_01375"/>
    </source>
</evidence>
<organism>
    <name type="scientific">Bacillus cereus (strain ATCC 10987 / NRS 248)</name>
    <dbReference type="NCBI Taxonomy" id="222523"/>
    <lineage>
        <taxon>Bacteria</taxon>
        <taxon>Bacillati</taxon>
        <taxon>Bacillota</taxon>
        <taxon>Bacilli</taxon>
        <taxon>Bacillales</taxon>
        <taxon>Bacillaceae</taxon>
        <taxon>Bacillus</taxon>
        <taxon>Bacillus cereus group</taxon>
    </lineage>
</organism>
<feature type="chain" id="PRO_0000284576" description="Phosphonoacetaldehyde hydrolase">
    <location>
        <begin position="1"/>
        <end position="264"/>
    </location>
</feature>
<feature type="active site" description="Nucleophile" evidence="1">
    <location>
        <position position="9"/>
    </location>
</feature>
<feature type="active site" description="Schiff-base intermediate with substrate" evidence="1">
    <location>
        <position position="50"/>
    </location>
</feature>
<feature type="binding site" evidence="1">
    <location>
        <position position="9"/>
    </location>
    <ligand>
        <name>Mg(2+)</name>
        <dbReference type="ChEBI" id="CHEBI:18420"/>
    </ligand>
</feature>
<feature type="binding site" evidence="1">
    <location>
        <position position="11"/>
    </location>
    <ligand>
        <name>Mg(2+)</name>
        <dbReference type="ChEBI" id="CHEBI:18420"/>
    </ligand>
</feature>
<feature type="binding site" evidence="1">
    <location>
        <position position="183"/>
    </location>
    <ligand>
        <name>Mg(2+)</name>
        <dbReference type="ChEBI" id="CHEBI:18420"/>
    </ligand>
</feature>
<accession>Q73BH9</accession>
<gene>
    <name evidence="1" type="primary">phnX</name>
    <name type="ordered locus">BCE_1439</name>
</gene>
<reference key="1">
    <citation type="journal article" date="2004" name="Nucleic Acids Res.">
        <title>The genome sequence of Bacillus cereus ATCC 10987 reveals metabolic adaptations and a large plasmid related to Bacillus anthracis pXO1.</title>
        <authorList>
            <person name="Rasko D.A."/>
            <person name="Ravel J."/>
            <person name="Oekstad O.A."/>
            <person name="Helgason E."/>
            <person name="Cer R.Z."/>
            <person name="Jiang L."/>
            <person name="Shores K.A."/>
            <person name="Fouts D.E."/>
            <person name="Tourasse N.J."/>
            <person name="Angiuoli S.V."/>
            <person name="Kolonay J.F."/>
            <person name="Nelson W.C."/>
            <person name="Kolstoe A.-B."/>
            <person name="Fraser C.M."/>
            <person name="Read T.D."/>
        </authorList>
    </citation>
    <scope>NUCLEOTIDE SEQUENCE [LARGE SCALE GENOMIC DNA]</scope>
    <source>
        <strain>ATCC 10987 / NRS 248</strain>
    </source>
</reference>
<sequence>MKIEAVIFDWAGTTVDYGCFAPLEVFMEIFHKRGVVITAEEARKPMGLLKIDHVRALTEMPRIASEWNRVFGQLPTETDIQEMYEEFEEILFTILPRYASPIHGVKEVIASLRERGIKIGSTTGYTREMMDIVAKEAALQGYKPDFLVTPDDVPAGRPYPWMCYKNAMELGVYPMNHMIKIGDTVSDMKEGRNAGMWTVGVILGSSELGLSEEEVENMDPVELREKIEVVRNRFVENGAHFTIETMQELETVMEHIEKQQLIIS</sequence>
<name>PHNX_BACC1</name>
<comment type="function">
    <text evidence="1">Involved in phosphonate degradation.</text>
</comment>
<comment type="catalytic activity">
    <reaction evidence="1">
        <text>phosphonoacetaldehyde + H2O = acetaldehyde + phosphate + H(+)</text>
        <dbReference type="Rhea" id="RHEA:18905"/>
        <dbReference type="ChEBI" id="CHEBI:15343"/>
        <dbReference type="ChEBI" id="CHEBI:15377"/>
        <dbReference type="ChEBI" id="CHEBI:15378"/>
        <dbReference type="ChEBI" id="CHEBI:43474"/>
        <dbReference type="ChEBI" id="CHEBI:58383"/>
        <dbReference type="EC" id="3.11.1.1"/>
    </reaction>
</comment>
<comment type="cofactor">
    <cofactor evidence="1">
        <name>Mg(2+)</name>
        <dbReference type="ChEBI" id="CHEBI:18420"/>
    </cofactor>
    <text evidence="1">Binds 1 Mg(2+) ion per subunit.</text>
</comment>
<comment type="subunit">
    <text evidence="1">Homodimer.</text>
</comment>
<comment type="similarity">
    <text evidence="1">Belongs to the HAD-like hydrolase superfamily. PhnX family.</text>
</comment>
<proteinExistence type="inferred from homology"/>
<protein>
    <recommendedName>
        <fullName evidence="1">Phosphonoacetaldehyde hydrolase</fullName>
        <shortName evidence="1">Phosphonatase</shortName>
        <ecNumber evidence="1">3.11.1.1</ecNumber>
    </recommendedName>
    <alternativeName>
        <fullName evidence="1">Phosphonoacetaldehyde phosphonohydrolase</fullName>
    </alternativeName>
</protein>